<feature type="chain" id="PRO_0000167769" description="Pyridoxine/pyridoxamine 5'-phosphate oxidase">
    <location>
        <begin position="1"/>
        <end position="211"/>
    </location>
</feature>
<feature type="binding site" evidence="1">
    <location>
        <begin position="7"/>
        <end position="10"/>
    </location>
    <ligand>
        <name>substrate</name>
    </ligand>
</feature>
<feature type="binding site" evidence="1">
    <location>
        <begin position="60"/>
        <end position="65"/>
    </location>
    <ligand>
        <name>FMN</name>
        <dbReference type="ChEBI" id="CHEBI:58210"/>
    </ligand>
</feature>
<feature type="binding site" evidence="1">
    <location>
        <position position="65"/>
    </location>
    <ligand>
        <name>substrate</name>
    </ligand>
</feature>
<feature type="binding site" evidence="1">
    <location>
        <begin position="75"/>
        <end position="76"/>
    </location>
    <ligand>
        <name>FMN</name>
        <dbReference type="ChEBI" id="CHEBI:58210"/>
    </ligand>
</feature>
<feature type="binding site" evidence="1">
    <location>
        <position position="81"/>
    </location>
    <ligand>
        <name>FMN</name>
        <dbReference type="ChEBI" id="CHEBI:58210"/>
    </ligand>
</feature>
<feature type="binding site" evidence="1">
    <location>
        <position position="82"/>
    </location>
    <ligand>
        <name>FMN</name>
        <dbReference type="ChEBI" id="CHEBI:58210"/>
    </ligand>
</feature>
<feature type="binding site" evidence="1">
    <location>
        <position position="104"/>
    </location>
    <ligand>
        <name>FMN</name>
        <dbReference type="ChEBI" id="CHEBI:58210"/>
    </ligand>
</feature>
<feature type="binding site" evidence="1">
    <location>
        <position position="122"/>
    </location>
    <ligand>
        <name>substrate</name>
    </ligand>
</feature>
<feature type="binding site" evidence="1">
    <location>
        <position position="126"/>
    </location>
    <ligand>
        <name>substrate</name>
    </ligand>
</feature>
<feature type="binding site" evidence="1">
    <location>
        <position position="130"/>
    </location>
    <ligand>
        <name>substrate</name>
    </ligand>
</feature>
<feature type="binding site" evidence="1">
    <location>
        <begin position="139"/>
        <end position="140"/>
    </location>
    <ligand>
        <name>FMN</name>
        <dbReference type="ChEBI" id="CHEBI:58210"/>
    </ligand>
</feature>
<feature type="binding site" evidence="1">
    <location>
        <position position="184"/>
    </location>
    <ligand>
        <name>FMN</name>
        <dbReference type="ChEBI" id="CHEBI:58210"/>
    </ligand>
</feature>
<feature type="binding site" evidence="1">
    <location>
        <begin position="190"/>
        <end position="192"/>
    </location>
    <ligand>
        <name>substrate</name>
    </ligand>
</feature>
<feature type="binding site" evidence="1">
    <location>
        <position position="194"/>
    </location>
    <ligand>
        <name>FMN</name>
        <dbReference type="ChEBI" id="CHEBI:58210"/>
    </ligand>
</feature>
<comment type="function">
    <text evidence="1">Catalyzes the oxidation of either pyridoxine 5'-phosphate (PNP) or pyridoxamine 5'-phosphate (PMP) into pyridoxal 5'-phosphate (PLP).</text>
</comment>
<comment type="catalytic activity">
    <reaction evidence="1">
        <text>pyridoxamine 5'-phosphate + O2 + H2O = pyridoxal 5'-phosphate + H2O2 + NH4(+)</text>
        <dbReference type="Rhea" id="RHEA:15817"/>
        <dbReference type="ChEBI" id="CHEBI:15377"/>
        <dbReference type="ChEBI" id="CHEBI:15379"/>
        <dbReference type="ChEBI" id="CHEBI:16240"/>
        <dbReference type="ChEBI" id="CHEBI:28938"/>
        <dbReference type="ChEBI" id="CHEBI:58451"/>
        <dbReference type="ChEBI" id="CHEBI:597326"/>
        <dbReference type="EC" id="1.4.3.5"/>
    </reaction>
</comment>
<comment type="catalytic activity">
    <reaction evidence="1">
        <text>pyridoxine 5'-phosphate + O2 = pyridoxal 5'-phosphate + H2O2</text>
        <dbReference type="Rhea" id="RHEA:15149"/>
        <dbReference type="ChEBI" id="CHEBI:15379"/>
        <dbReference type="ChEBI" id="CHEBI:16240"/>
        <dbReference type="ChEBI" id="CHEBI:58589"/>
        <dbReference type="ChEBI" id="CHEBI:597326"/>
        <dbReference type="EC" id="1.4.3.5"/>
    </reaction>
</comment>
<comment type="cofactor">
    <cofactor evidence="1">
        <name>FMN</name>
        <dbReference type="ChEBI" id="CHEBI:58210"/>
    </cofactor>
    <text evidence="1">Binds 1 FMN per subunit.</text>
</comment>
<comment type="pathway">
    <text evidence="1">Cofactor metabolism; pyridoxal 5'-phosphate salvage; pyridoxal 5'-phosphate from pyridoxamine 5'-phosphate: step 1/1.</text>
</comment>
<comment type="pathway">
    <text evidence="1">Cofactor metabolism; pyridoxal 5'-phosphate salvage; pyridoxal 5'-phosphate from pyridoxine 5'-phosphate: step 1/1.</text>
</comment>
<comment type="subunit">
    <text evidence="1">Homodimer.</text>
</comment>
<comment type="similarity">
    <text evidence="1">Belongs to the pyridoxamine 5'-phosphate oxidase family.</text>
</comment>
<comment type="sequence caution" evidence="2">
    <conflict type="erroneous initiation">
        <sequence resource="EMBL-CDS" id="BAC97674"/>
    </conflict>
</comment>
<keyword id="KW-0285">Flavoprotein</keyword>
<keyword id="KW-0288">FMN</keyword>
<keyword id="KW-0560">Oxidoreductase</keyword>
<keyword id="KW-0664">Pyridoxine biosynthesis</keyword>
<reference key="1">
    <citation type="journal article" date="2003" name="Genome Res.">
        <title>Comparative genome analysis of Vibrio vulnificus, a marine pathogen.</title>
        <authorList>
            <person name="Chen C.-Y."/>
            <person name="Wu K.-M."/>
            <person name="Chang Y.-C."/>
            <person name="Chang C.-H."/>
            <person name="Tsai H.-C."/>
            <person name="Liao T.-L."/>
            <person name="Liu Y.-M."/>
            <person name="Chen H.-J."/>
            <person name="Shen A.B.-T."/>
            <person name="Li J.-C."/>
            <person name="Su T.-L."/>
            <person name="Shao C.-P."/>
            <person name="Lee C.-T."/>
            <person name="Hor L.-I."/>
            <person name="Tsai S.-F."/>
        </authorList>
    </citation>
    <scope>NUCLEOTIDE SEQUENCE [LARGE SCALE GENOMIC DNA]</scope>
    <source>
        <strain>YJ016</strain>
    </source>
</reference>
<organism>
    <name type="scientific">Vibrio vulnificus (strain YJ016)</name>
    <dbReference type="NCBI Taxonomy" id="196600"/>
    <lineage>
        <taxon>Bacteria</taxon>
        <taxon>Pseudomonadati</taxon>
        <taxon>Pseudomonadota</taxon>
        <taxon>Gammaproteobacteria</taxon>
        <taxon>Vibrionales</taxon>
        <taxon>Vibrionaceae</taxon>
        <taxon>Vibrio</taxon>
    </lineage>
</organism>
<accession>Q7MBT9</accession>
<evidence type="ECO:0000255" key="1">
    <source>
        <dbReference type="HAMAP-Rule" id="MF_01629"/>
    </source>
</evidence>
<evidence type="ECO:0000305" key="2"/>
<name>PDXH_VIBVY</name>
<proteinExistence type="inferred from homology"/>
<sequence length="211" mass="24425">MELADIRREYTKGGLRRKDLKNDPIDQFNFWLEQAIKANLSDPTAMTVATVDKDGMPFQRIVLLKNVDKDGFVFYTNLGSRKAQHLEHNSKISLHFPWHPLERQVHITGVAEKLTAMENMKYFTSRPKESQLAAMASRQSSRISARGVLEGKFLELKQKFANGEIPVPSFWGGFRVKPQSIEFWQGGEHRLHDRFLYSQEQGEWHIDRLAP</sequence>
<protein>
    <recommendedName>
        <fullName evidence="1">Pyridoxine/pyridoxamine 5'-phosphate oxidase</fullName>
        <ecNumber evidence="1">1.4.3.5</ecNumber>
    </recommendedName>
    <alternativeName>
        <fullName evidence="1">PNP/PMP oxidase</fullName>
        <shortName evidence="1">PNPOx</shortName>
    </alternativeName>
    <alternativeName>
        <fullName evidence="1">Pyridoxal 5'-phosphate synthase</fullName>
    </alternativeName>
</protein>
<dbReference type="EC" id="1.4.3.5" evidence="1"/>
<dbReference type="EMBL" id="BA000038">
    <property type="protein sequence ID" value="BAC97674.1"/>
    <property type="status" value="ALT_INIT"/>
    <property type="molecule type" value="Genomic_DNA"/>
</dbReference>
<dbReference type="RefSeq" id="WP_011082018.1">
    <property type="nucleotide sequence ID" value="NC_005140.1"/>
</dbReference>
<dbReference type="SMR" id="Q7MBT9"/>
<dbReference type="STRING" id="672.VV93_v1c45120"/>
<dbReference type="KEGG" id="vvy:VVA1648"/>
<dbReference type="eggNOG" id="COG0259">
    <property type="taxonomic scope" value="Bacteria"/>
</dbReference>
<dbReference type="HOGENOM" id="CLU_032263_2_2_6"/>
<dbReference type="UniPathway" id="UPA01068">
    <property type="reaction ID" value="UER00304"/>
</dbReference>
<dbReference type="UniPathway" id="UPA01068">
    <property type="reaction ID" value="UER00305"/>
</dbReference>
<dbReference type="Proteomes" id="UP000002675">
    <property type="component" value="Chromosome II"/>
</dbReference>
<dbReference type="GO" id="GO:0010181">
    <property type="term" value="F:FMN binding"/>
    <property type="evidence" value="ECO:0007669"/>
    <property type="project" value="UniProtKB-UniRule"/>
</dbReference>
<dbReference type="GO" id="GO:0004733">
    <property type="term" value="F:pyridoxamine phosphate oxidase activity"/>
    <property type="evidence" value="ECO:0007669"/>
    <property type="project" value="UniProtKB-UniRule"/>
</dbReference>
<dbReference type="GO" id="GO:0008615">
    <property type="term" value="P:pyridoxine biosynthetic process"/>
    <property type="evidence" value="ECO:0007669"/>
    <property type="project" value="UniProtKB-KW"/>
</dbReference>
<dbReference type="Gene3D" id="2.30.110.10">
    <property type="entry name" value="Electron Transport, Fmn-binding Protein, Chain A"/>
    <property type="match status" value="1"/>
</dbReference>
<dbReference type="HAMAP" id="MF_01629">
    <property type="entry name" value="PdxH"/>
    <property type="match status" value="1"/>
</dbReference>
<dbReference type="InterPro" id="IPR000659">
    <property type="entry name" value="Pyridox_Oxase"/>
</dbReference>
<dbReference type="InterPro" id="IPR019740">
    <property type="entry name" value="Pyridox_Oxase_CS"/>
</dbReference>
<dbReference type="InterPro" id="IPR011576">
    <property type="entry name" value="Pyridox_Oxase_N"/>
</dbReference>
<dbReference type="InterPro" id="IPR019576">
    <property type="entry name" value="Pyridoxamine_oxidase_dimer_C"/>
</dbReference>
<dbReference type="InterPro" id="IPR012349">
    <property type="entry name" value="Split_barrel_FMN-bd"/>
</dbReference>
<dbReference type="NCBIfam" id="TIGR00558">
    <property type="entry name" value="pdxH"/>
    <property type="match status" value="1"/>
</dbReference>
<dbReference type="NCBIfam" id="NF004231">
    <property type="entry name" value="PRK05679.1"/>
    <property type="match status" value="1"/>
</dbReference>
<dbReference type="PANTHER" id="PTHR10851:SF0">
    <property type="entry name" value="PYRIDOXINE-5'-PHOSPHATE OXIDASE"/>
    <property type="match status" value="1"/>
</dbReference>
<dbReference type="PANTHER" id="PTHR10851">
    <property type="entry name" value="PYRIDOXINE-5-PHOSPHATE OXIDASE"/>
    <property type="match status" value="1"/>
</dbReference>
<dbReference type="Pfam" id="PF10590">
    <property type="entry name" value="PNP_phzG_C"/>
    <property type="match status" value="1"/>
</dbReference>
<dbReference type="Pfam" id="PF01243">
    <property type="entry name" value="PNPOx_N"/>
    <property type="match status" value="1"/>
</dbReference>
<dbReference type="PIRSF" id="PIRSF000190">
    <property type="entry name" value="Pyd_amn-ph_oxd"/>
    <property type="match status" value="1"/>
</dbReference>
<dbReference type="SUPFAM" id="SSF50475">
    <property type="entry name" value="FMN-binding split barrel"/>
    <property type="match status" value="1"/>
</dbReference>
<dbReference type="PROSITE" id="PS01064">
    <property type="entry name" value="PYRIDOX_OXIDASE"/>
    <property type="match status" value="1"/>
</dbReference>
<gene>
    <name evidence="1" type="primary">pdxH</name>
    <name type="ordered locus">VVA1648</name>
</gene>